<proteinExistence type="inferred from homology"/>
<accession>P45079</accession>
<dbReference type="EMBL" id="L42023">
    <property type="protein sequence ID" value="AAC22809.1"/>
    <property type="molecule type" value="Genomic_DNA"/>
</dbReference>
<dbReference type="PIR" id="D64186">
    <property type="entry name" value="D64186"/>
</dbReference>
<dbReference type="RefSeq" id="NP_439312.1">
    <property type="nucleotide sequence ID" value="NC_000907.1"/>
</dbReference>
<dbReference type="SMR" id="P45079"/>
<dbReference type="EnsemblBacteria" id="AAC22809">
    <property type="protein sequence ID" value="AAC22809"/>
    <property type="gene ID" value="HI_1154"/>
</dbReference>
<dbReference type="KEGG" id="hin:HI_1154"/>
<dbReference type="PATRIC" id="fig|71421.8.peg.1205"/>
<dbReference type="eggNOG" id="COG1823">
    <property type="taxonomic scope" value="Bacteria"/>
</dbReference>
<dbReference type="HOGENOM" id="CLU_019375_0_1_6"/>
<dbReference type="OrthoDB" id="9766690at2"/>
<dbReference type="PhylomeDB" id="P45079"/>
<dbReference type="BioCyc" id="HINF71421:G1GJ1-1187-MONOMER"/>
<dbReference type="Proteomes" id="UP000000579">
    <property type="component" value="Chromosome"/>
</dbReference>
<dbReference type="GO" id="GO:0005886">
    <property type="term" value="C:plasma membrane"/>
    <property type="evidence" value="ECO:0000318"/>
    <property type="project" value="GO_Central"/>
</dbReference>
<dbReference type="GO" id="GO:0015184">
    <property type="term" value="F:L-cystine transmembrane transporter activity"/>
    <property type="evidence" value="ECO:0000318"/>
    <property type="project" value="GO_Central"/>
</dbReference>
<dbReference type="GO" id="GO:0015293">
    <property type="term" value="F:symporter activity"/>
    <property type="evidence" value="ECO:0007669"/>
    <property type="project" value="InterPro"/>
</dbReference>
<dbReference type="Gene3D" id="1.10.3860.10">
    <property type="entry name" value="Sodium:dicarboxylate symporter"/>
    <property type="match status" value="1"/>
</dbReference>
<dbReference type="InterPro" id="IPR001991">
    <property type="entry name" value="Na-dicarboxylate_symporter"/>
</dbReference>
<dbReference type="InterPro" id="IPR036458">
    <property type="entry name" value="Na:dicarbo_symporter_sf"/>
</dbReference>
<dbReference type="PANTHER" id="PTHR42865:SF5">
    <property type="entry name" value="L-CYSTINE TRANSPORTER TCYP"/>
    <property type="match status" value="1"/>
</dbReference>
<dbReference type="PANTHER" id="PTHR42865">
    <property type="entry name" value="PROTON/GLUTAMATE-ASPARTATE SYMPORTER"/>
    <property type="match status" value="1"/>
</dbReference>
<dbReference type="Pfam" id="PF00375">
    <property type="entry name" value="SDF"/>
    <property type="match status" value="1"/>
</dbReference>
<dbReference type="PRINTS" id="PR00173">
    <property type="entry name" value="EDTRNSPORT"/>
</dbReference>
<dbReference type="SUPFAM" id="SSF118215">
    <property type="entry name" value="Proton glutamate symport protein"/>
    <property type="match status" value="1"/>
</dbReference>
<reference key="1">
    <citation type="journal article" date="1995" name="Science">
        <title>Whole-genome random sequencing and assembly of Haemophilus influenzae Rd.</title>
        <authorList>
            <person name="Fleischmann R.D."/>
            <person name="Adams M.D."/>
            <person name="White O."/>
            <person name="Clayton R.A."/>
            <person name="Kirkness E.F."/>
            <person name="Kerlavage A.R."/>
            <person name="Bult C.J."/>
            <person name="Tomb J.-F."/>
            <person name="Dougherty B.A."/>
            <person name="Merrick J.M."/>
            <person name="McKenney K."/>
            <person name="Sutton G.G."/>
            <person name="FitzHugh W."/>
            <person name="Fields C.A."/>
            <person name="Gocayne J.D."/>
            <person name="Scott J.D."/>
            <person name="Shirley R."/>
            <person name="Liu L.-I."/>
            <person name="Glodek A."/>
            <person name="Kelley J.M."/>
            <person name="Weidman J.F."/>
            <person name="Phillips C.A."/>
            <person name="Spriggs T."/>
            <person name="Hedblom E."/>
            <person name="Cotton M.D."/>
            <person name="Utterback T.R."/>
            <person name="Hanna M.C."/>
            <person name="Nguyen D.T."/>
            <person name="Saudek D.M."/>
            <person name="Brandon R.C."/>
            <person name="Fine L.D."/>
            <person name="Fritchman J.L."/>
            <person name="Fuhrmann J.L."/>
            <person name="Geoghagen N.S.M."/>
            <person name="Gnehm C.L."/>
            <person name="McDonald L.A."/>
            <person name="Small K.V."/>
            <person name="Fraser C.M."/>
            <person name="Smith H.O."/>
            <person name="Venter J.C."/>
        </authorList>
    </citation>
    <scope>NUCLEOTIDE SEQUENCE [LARGE SCALE GENOMIC DNA]</scope>
    <source>
        <strain>ATCC 51907 / DSM 11121 / KW20 / Rd</strain>
    </source>
</reference>
<evidence type="ECO:0000255" key="1"/>
<evidence type="ECO:0000305" key="2"/>
<sequence>MLLVNLAIFIAFLLLLAQLYRKTEKLGQTVFIGLLLGLLFGAVLQSAFEKPLLDKTLDWINVVSNGYVRLLQMIVMPLVFVSILSAIARINQTRSLGKVSVGVLSTLLITTAISAAIGIAMVHLFDVSAAGLIVGDRELAAQGKVLDKAGQVSNLTVPAMLVSFIPKNPFADLTGANPTSIISVVIFSALLGVAALSLGKEDQALGERIAQGVETLNKLVMRLVRFVIRLTPYGVFALMIKMAATSKWADIVNLGNFIVASYAAIALMFVVHGILLFFVKVNPVDYYKKVLPTLSFAFTSRSSAATIPLNIETQTAKLGNNNVIANFAATFGATIGQNGCGGIYPAMLAVMVAPMVGIDPFSFSYILTLIFVVAISSFGIAGVGGGATFAAIVVLSTLGLPLELIGLLISIEPIIDMGRTALNVNGAMVAGTITDRLLNK</sequence>
<feature type="chain" id="PRO_0000202122" description="Uncharacterized symporter HI_1154">
    <location>
        <begin position="1"/>
        <end position="440"/>
    </location>
</feature>
<feature type="transmembrane region" description="Helical" evidence="1">
    <location>
        <begin position="1"/>
        <end position="21"/>
    </location>
</feature>
<feature type="transmembrane region" description="Helical" evidence="1">
    <location>
        <begin position="29"/>
        <end position="49"/>
    </location>
</feature>
<feature type="transmembrane region" description="Helical" evidence="1">
    <location>
        <begin position="70"/>
        <end position="90"/>
    </location>
</feature>
<feature type="transmembrane region" description="Helical" evidence="1">
    <location>
        <begin position="101"/>
        <end position="121"/>
    </location>
</feature>
<feature type="transmembrane region" description="Helical" evidence="1">
    <location>
        <begin position="179"/>
        <end position="199"/>
    </location>
</feature>
<feature type="transmembrane region" description="Helical" evidence="1">
    <location>
        <begin position="226"/>
        <end position="246"/>
    </location>
</feature>
<feature type="transmembrane region" description="Helical" evidence="1">
    <location>
        <begin position="258"/>
        <end position="278"/>
    </location>
</feature>
<feature type="transmembrane region" description="Helical" evidence="1">
    <location>
        <begin position="343"/>
        <end position="363"/>
    </location>
</feature>
<feature type="transmembrane region" description="Helical" evidence="1">
    <location>
        <begin position="366"/>
        <end position="386"/>
    </location>
</feature>
<feature type="transmembrane region" description="Helical" evidence="1">
    <location>
        <begin position="389"/>
        <end position="409"/>
    </location>
</feature>
<keyword id="KW-1003">Cell membrane</keyword>
<keyword id="KW-0472">Membrane</keyword>
<keyword id="KW-1185">Reference proteome</keyword>
<keyword id="KW-0812">Transmembrane</keyword>
<keyword id="KW-1133">Transmembrane helix</keyword>
<keyword id="KW-0813">Transport</keyword>
<protein>
    <recommendedName>
        <fullName>Uncharacterized symporter HI_1154</fullName>
    </recommendedName>
</protein>
<organism>
    <name type="scientific">Haemophilus influenzae (strain ATCC 51907 / DSM 11121 / KW20 / Rd)</name>
    <dbReference type="NCBI Taxonomy" id="71421"/>
    <lineage>
        <taxon>Bacteria</taxon>
        <taxon>Pseudomonadati</taxon>
        <taxon>Pseudomonadota</taxon>
        <taxon>Gammaproteobacteria</taxon>
        <taxon>Pasteurellales</taxon>
        <taxon>Pasteurellaceae</taxon>
        <taxon>Haemophilus</taxon>
    </lineage>
</organism>
<name>Y1154_HAEIN</name>
<comment type="subcellular location">
    <subcellularLocation>
        <location evidence="2">Cell membrane</location>
        <topology evidence="2">Multi-pass membrane protein</topology>
    </subcellularLocation>
</comment>
<comment type="similarity">
    <text evidence="2">Belongs to the dicarboxylate/amino acid:cation symporter (DAACS) (TC 2.A.23) family.</text>
</comment>
<gene>
    <name type="ordered locus">HI_1154</name>
</gene>